<feature type="chain" id="PRO_1000118932" description="Ribonuclease 3">
    <location>
        <begin position="1"/>
        <end position="242"/>
    </location>
</feature>
<feature type="domain" description="RNase III" evidence="1">
    <location>
        <begin position="10"/>
        <end position="146"/>
    </location>
</feature>
<feature type="domain" description="DRBM" evidence="1">
    <location>
        <begin position="172"/>
        <end position="241"/>
    </location>
</feature>
<feature type="region of interest" description="Disordered" evidence="2">
    <location>
        <begin position="216"/>
        <end position="242"/>
    </location>
</feature>
<feature type="compositionally biased region" description="Basic and acidic residues" evidence="2">
    <location>
        <begin position="223"/>
        <end position="242"/>
    </location>
</feature>
<feature type="active site" evidence="1">
    <location>
        <position position="63"/>
    </location>
</feature>
<feature type="active site" evidence="1">
    <location>
        <position position="135"/>
    </location>
</feature>
<feature type="binding site" evidence="1">
    <location>
        <position position="59"/>
    </location>
    <ligand>
        <name>Mg(2+)</name>
        <dbReference type="ChEBI" id="CHEBI:18420"/>
    </ligand>
</feature>
<feature type="binding site" evidence="1">
    <location>
        <position position="132"/>
    </location>
    <ligand>
        <name>Mg(2+)</name>
        <dbReference type="ChEBI" id="CHEBI:18420"/>
    </ligand>
</feature>
<feature type="binding site" evidence="1">
    <location>
        <position position="135"/>
    </location>
    <ligand>
        <name>Mg(2+)</name>
        <dbReference type="ChEBI" id="CHEBI:18420"/>
    </ligand>
</feature>
<evidence type="ECO:0000255" key="1">
    <source>
        <dbReference type="HAMAP-Rule" id="MF_00104"/>
    </source>
</evidence>
<evidence type="ECO:0000256" key="2">
    <source>
        <dbReference type="SAM" id="MobiDB-lite"/>
    </source>
</evidence>
<gene>
    <name evidence="1" type="primary">rnc</name>
    <name type="ordered locus">Sca_0856</name>
</gene>
<proteinExistence type="inferred from homology"/>
<name>RNC_STACT</name>
<sequence>MTNHKKEALLQNFNKKFADKMHMLKLNYDHLPLYQQAFSHSSFINDFNMDRLAHNERLEFLGDAVLELTVSRYLFDKYPELPEGNLTKMRATIVCEPSLVIFANKIQLNELILLGKGEEKTGGRTRPSLVSDAFEAFVGALYLDQGLDAVWQFSEEVIFPHVEDDELMGVVDFKTQFQELIHRLSKGNVTYRLIDEQGPAHHRLFTSEVLLEGEPVAKGQGRTKKESEQKAAEKAYNDMKKK</sequence>
<keyword id="KW-0963">Cytoplasm</keyword>
<keyword id="KW-0255">Endonuclease</keyword>
<keyword id="KW-0378">Hydrolase</keyword>
<keyword id="KW-0460">Magnesium</keyword>
<keyword id="KW-0479">Metal-binding</keyword>
<keyword id="KW-0507">mRNA processing</keyword>
<keyword id="KW-0540">Nuclease</keyword>
<keyword id="KW-1185">Reference proteome</keyword>
<keyword id="KW-0694">RNA-binding</keyword>
<keyword id="KW-0698">rRNA processing</keyword>
<keyword id="KW-0699">rRNA-binding</keyword>
<keyword id="KW-0819">tRNA processing</keyword>
<organism>
    <name type="scientific">Staphylococcus carnosus (strain TM300)</name>
    <dbReference type="NCBI Taxonomy" id="396513"/>
    <lineage>
        <taxon>Bacteria</taxon>
        <taxon>Bacillati</taxon>
        <taxon>Bacillota</taxon>
        <taxon>Bacilli</taxon>
        <taxon>Bacillales</taxon>
        <taxon>Staphylococcaceae</taxon>
        <taxon>Staphylococcus</taxon>
    </lineage>
</organism>
<reference key="1">
    <citation type="journal article" date="2009" name="Appl. Environ. Microbiol.">
        <title>Genome analysis of the meat starter culture bacterium Staphylococcus carnosus TM300.</title>
        <authorList>
            <person name="Rosenstein R."/>
            <person name="Nerz C."/>
            <person name="Biswas L."/>
            <person name="Resch A."/>
            <person name="Raddatz G."/>
            <person name="Schuster S.C."/>
            <person name="Goetz F."/>
        </authorList>
    </citation>
    <scope>NUCLEOTIDE SEQUENCE [LARGE SCALE GENOMIC DNA]</scope>
    <source>
        <strain>TM300</strain>
    </source>
</reference>
<protein>
    <recommendedName>
        <fullName evidence="1">Ribonuclease 3</fullName>
        <ecNumber evidence="1">3.1.26.3</ecNumber>
    </recommendedName>
    <alternativeName>
        <fullName evidence="1">Ribonuclease III</fullName>
        <shortName evidence="1">RNase III</shortName>
    </alternativeName>
</protein>
<dbReference type="EC" id="3.1.26.3" evidence="1"/>
<dbReference type="EMBL" id="AM295250">
    <property type="protein sequence ID" value="CAL27766.1"/>
    <property type="molecule type" value="Genomic_DNA"/>
</dbReference>
<dbReference type="RefSeq" id="WP_015900107.1">
    <property type="nucleotide sequence ID" value="NC_012121.1"/>
</dbReference>
<dbReference type="SMR" id="B9DPJ2"/>
<dbReference type="KEGG" id="sca:SCA_0856"/>
<dbReference type="eggNOG" id="COG0571">
    <property type="taxonomic scope" value="Bacteria"/>
</dbReference>
<dbReference type="HOGENOM" id="CLU_000907_1_3_9"/>
<dbReference type="OrthoDB" id="9805026at2"/>
<dbReference type="BioCyc" id="SCAR396513:SCA_RS04330-MONOMER"/>
<dbReference type="Proteomes" id="UP000000444">
    <property type="component" value="Chromosome"/>
</dbReference>
<dbReference type="GO" id="GO:0005737">
    <property type="term" value="C:cytoplasm"/>
    <property type="evidence" value="ECO:0007669"/>
    <property type="project" value="UniProtKB-SubCell"/>
</dbReference>
<dbReference type="GO" id="GO:0003725">
    <property type="term" value="F:double-stranded RNA binding"/>
    <property type="evidence" value="ECO:0007669"/>
    <property type="project" value="TreeGrafter"/>
</dbReference>
<dbReference type="GO" id="GO:0046872">
    <property type="term" value="F:metal ion binding"/>
    <property type="evidence" value="ECO:0007669"/>
    <property type="project" value="UniProtKB-KW"/>
</dbReference>
<dbReference type="GO" id="GO:0004525">
    <property type="term" value="F:ribonuclease III activity"/>
    <property type="evidence" value="ECO:0007669"/>
    <property type="project" value="UniProtKB-UniRule"/>
</dbReference>
<dbReference type="GO" id="GO:0019843">
    <property type="term" value="F:rRNA binding"/>
    <property type="evidence" value="ECO:0007669"/>
    <property type="project" value="UniProtKB-KW"/>
</dbReference>
<dbReference type="GO" id="GO:0006397">
    <property type="term" value="P:mRNA processing"/>
    <property type="evidence" value="ECO:0007669"/>
    <property type="project" value="UniProtKB-UniRule"/>
</dbReference>
<dbReference type="GO" id="GO:0010468">
    <property type="term" value="P:regulation of gene expression"/>
    <property type="evidence" value="ECO:0007669"/>
    <property type="project" value="TreeGrafter"/>
</dbReference>
<dbReference type="GO" id="GO:0006364">
    <property type="term" value="P:rRNA processing"/>
    <property type="evidence" value="ECO:0007669"/>
    <property type="project" value="UniProtKB-UniRule"/>
</dbReference>
<dbReference type="GO" id="GO:0008033">
    <property type="term" value="P:tRNA processing"/>
    <property type="evidence" value="ECO:0007669"/>
    <property type="project" value="UniProtKB-KW"/>
</dbReference>
<dbReference type="CDD" id="cd10845">
    <property type="entry name" value="DSRM_RNAse_III_family"/>
    <property type="match status" value="1"/>
</dbReference>
<dbReference type="CDD" id="cd00593">
    <property type="entry name" value="RIBOc"/>
    <property type="match status" value="1"/>
</dbReference>
<dbReference type="FunFam" id="1.10.1520.10:FF:000001">
    <property type="entry name" value="Ribonuclease 3"/>
    <property type="match status" value="1"/>
</dbReference>
<dbReference type="FunFam" id="3.30.160.20:FF:000003">
    <property type="entry name" value="Ribonuclease 3"/>
    <property type="match status" value="1"/>
</dbReference>
<dbReference type="Gene3D" id="3.30.160.20">
    <property type="match status" value="1"/>
</dbReference>
<dbReference type="Gene3D" id="1.10.1520.10">
    <property type="entry name" value="Ribonuclease III domain"/>
    <property type="match status" value="1"/>
</dbReference>
<dbReference type="HAMAP" id="MF_00104">
    <property type="entry name" value="RNase_III"/>
    <property type="match status" value="1"/>
</dbReference>
<dbReference type="InterPro" id="IPR014720">
    <property type="entry name" value="dsRBD_dom"/>
</dbReference>
<dbReference type="InterPro" id="IPR011907">
    <property type="entry name" value="RNase_III"/>
</dbReference>
<dbReference type="InterPro" id="IPR000999">
    <property type="entry name" value="RNase_III_dom"/>
</dbReference>
<dbReference type="InterPro" id="IPR036389">
    <property type="entry name" value="RNase_III_sf"/>
</dbReference>
<dbReference type="NCBIfam" id="TIGR02191">
    <property type="entry name" value="RNaseIII"/>
    <property type="match status" value="1"/>
</dbReference>
<dbReference type="PANTHER" id="PTHR11207:SF0">
    <property type="entry name" value="RIBONUCLEASE 3"/>
    <property type="match status" value="1"/>
</dbReference>
<dbReference type="PANTHER" id="PTHR11207">
    <property type="entry name" value="RIBONUCLEASE III"/>
    <property type="match status" value="1"/>
</dbReference>
<dbReference type="Pfam" id="PF00035">
    <property type="entry name" value="dsrm"/>
    <property type="match status" value="1"/>
</dbReference>
<dbReference type="Pfam" id="PF14622">
    <property type="entry name" value="Ribonucleas_3_3"/>
    <property type="match status" value="1"/>
</dbReference>
<dbReference type="SMART" id="SM00358">
    <property type="entry name" value="DSRM"/>
    <property type="match status" value="1"/>
</dbReference>
<dbReference type="SMART" id="SM00535">
    <property type="entry name" value="RIBOc"/>
    <property type="match status" value="1"/>
</dbReference>
<dbReference type="SUPFAM" id="SSF54768">
    <property type="entry name" value="dsRNA-binding domain-like"/>
    <property type="match status" value="1"/>
</dbReference>
<dbReference type="SUPFAM" id="SSF69065">
    <property type="entry name" value="RNase III domain-like"/>
    <property type="match status" value="1"/>
</dbReference>
<dbReference type="PROSITE" id="PS50137">
    <property type="entry name" value="DS_RBD"/>
    <property type="match status" value="1"/>
</dbReference>
<dbReference type="PROSITE" id="PS00517">
    <property type="entry name" value="RNASE_3_1"/>
    <property type="match status" value="1"/>
</dbReference>
<dbReference type="PROSITE" id="PS50142">
    <property type="entry name" value="RNASE_3_2"/>
    <property type="match status" value="1"/>
</dbReference>
<comment type="function">
    <text evidence="1">Digests double-stranded RNA. Involved in the processing of primary rRNA transcript to yield the immediate precursors to the large and small rRNAs (23S and 16S). Processes some mRNAs, and tRNAs when they are encoded in the rRNA operon. Processes pre-crRNA and tracrRNA of type II CRISPR loci if present in the organism.</text>
</comment>
<comment type="catalytic activity">
    <reaction evidence="1">
        <text>Endonucleolytic cleavage to 5'-phosphomonoester.</text>
        <dbReference type="EC" id="3.1.26.3"/>
    </reaction>
</comment>
<comment type="cofactor">
    <cofactor evidence="1">
        <name>Mg(2+)</name>
        <dbReference type="ChEBI" id="CHEBI:18420"/>
    </cofactor>
</comment>
<comment type="subunit">
    <text evidence="1">Homodimer.</text>
</comment>
<comment type="subcellular location">
    <subcellularLocation>
        <location evidence="1">Cytoplasm</location>
    </subcellularLocation>
</comment>
<comment type="similarity">
    <text evidence="1">Belongs to the ribonuclease III family.</text>
</comment>
<accession>B9DPJ2</accession>